<name>EFPL_ECODH</name>
<dbReference type="EMBL" id="CP000948">
    <property type="protein sequence ID" value="ACB03335.1"/>
    <property type="molecule type" value="Genomic_DNA"/>
</dbReference>
<dbReference type="RefSeq" id="WP_001136827.1">
    <property type="nucleotide sequence ID" value="NC_010473.1"/>
</dbReference>
<dbReference type="SMR" id="B1X869"/>
<dbReference type="GeneID" id="93775010"/>
<dbReference type="KEGG" id="ecd:ECDH10B_2329"/>
<dbReference type="HOGENOM" id="CLU_074944_2_0_6"/>
<dbReference type="GO" id="GO:0005829">
    <property type="term" value="C:cytosol"/>
    <property type="evidence" value="ECO:0007669"/>
    <property type="project" value="UniProtKB-ARBA"/>
</dbReference>
<dbReference type="GO" id="GO:0003746">
    <property type="term" value="F:translation elongation factor activity"/>
    <property type="evidence" value="ECO:0007669"/>
    <property type="project" value="UniProtKB-UniRule"/>
</dbReference>
<dbReference type="GO" id="GO:0043043">
    <property type="term" value="P:peptide biosynthetic process"/>
    <property type="evidence" value="ECO:0007669"/>
    <property type="project" value="InterPro"/>
</dbReference>
<dbReference type="CDD" id="cd04470">
    <property type="entry name" value="S1_EF-P_repeat_1"/>
    <property type="match status" value="1"/>
</dbReference>
<dbReference type="CDD" id="cd05794">
    <property type="entry name" value="S1_EF-P_repeat_2"/>
    <property type="match status" value="1"/>
</dbReference>
<dbReference type="FunFam" id="2.40.50.140:FF:000004">
    <property type="entry name" value="Elongation factor P"/>
    <property type="match status" value="1"/>
</dbReference>
<dbReference type="FunFam" id="2.30.30.30:FF:000011">
    <property type="entry name" value="Elongation factor P-like protein"/>
    <property type="match status" value="1"/>
</dbReference>
<dbReference type="FunFam" id="2.40.50.140:FF:000053">
    <property type="entry name" value="Elongation factor P-like protein"/>
    <property type="match status" value="1"/>
</dbReference>
<dbReference type="Gene3D" id="2.30.30.30">
    <property type="match status" value="1"/>
</dbReference>
<dbReference type="Gene3D" id="2.40.50.140">
    <property type="entry name" value="Nucleic acid-binding proteins"/>
    <property type="match status" value="2"/>
</dbReference>
<dbReference type="HAMAP" id="MF_00646">
    <property type="entry name" value="EFP"/>
    <property type="match status" value="1"/>
</dbReference>
<dbReference type="InterPro" id="IPR015365">
    <property type="entry name" value="Elong-fact-P_C"/>
</dbReference>
<dbReference type="InterPro" id="IPR012340">
    <property type="entry name" value="NA-bd_OB-fold"/>
</dbReference>
<dbReference type="InterPro" id="IPR014722">
    <property type="entry name" value="Rib_uL2_dom2"/>
</dbReference>
<dbReference type="InterPro" id="IPR020599">
    <property type="entry name" value="Transl_elong_fac_P/YeiP"/>
</dbReference>
<dbReference type="InterPro" id="IPR013185">
    <property type="entry name" value="Transl_elong_KOW-like"/>
</dbReference>
<dbReference type="InterPro" id="IPR011897">
    <property type="entry name" value="Transl_elong_p-like_YeiP"/>
</dbReference>
<dbReference type="InterPro" id="IPR001059">
    <property type="entry name" value="Transl_elong_P/YeiP_cen"/>
</dbReference>
<dbReference type="InterPro" id="IPR013852">
    <property type="entry name" value="Transl_elong_P/YeiP_CS"/>
</dbReference>
<dbReference type="InterPro" id="IPR008991">
    <property type="entry name" value="Translation_prot_SH3-like_sf"/>
</dbReference>
<dbReference type="NCBIfam" id="NF001810">
    <property type="entry name" value="PRK00529.1"/>
    <property type="match status" value="1"/>
</dbReference>
<dbReference type="NCBIfam" id="NF003392">
    <property type="entry name" value="PRK04542.1"/>
    <property type="match status" value="1"/>
</dbReference>
<dbReference type="NCBIfam" id="TIGR02178">
    <property type="entry name" value="yeiP"/>
    <property type="match status" value="1"/>
</dbReference>
<dbReference type="PANTHER" id="PTHR30053">
    <property type="entry name" value="ELONGATION FACTOR P"/>
    <property type="match status" value="1"/>
</dbReference>
<dbReference type="PANTHER" id="PTHR30053:SF14">
    <property type="entry name" value="TRANSLATION ELONGATION FACTOR KOW-LIKE DOMAIN-CONTAINING PROTEIN"/>
    <property type="match status" value="1"/>
</dbReference>
<dbReference type="Pfam" id="PF01132">
    <property type="entry name" value="EFP"/>
    <property type="match status" value="1"/>
</dbReference>
<dbReference type="Pfam" id="PF08207">
    <property type="entry name" value="EFP_N"/>
    <property type="match status" value="1"/>
</dbReference>
<dbReference type="Pfam" id="PF09285">
    <property type="entry name" value="Elong-fact-P_C"/>
    <property type="match status" value="1"/>
</dbReference>
<dbReference type="PIRSF" id="PIRSF005901">
    <property type="entry name" value="EF-P"/>
    <property type="match status" value="1"/>
</dbReference>
<dbReference type="SMART" id="SM01185">
    <property type="entry name" value="EFP"/>
    <property type="match status" value="1"/>
</dbReference>
<dbReference type="SMART" id="SM00841">
    <property type="entry name" value="Elong-fact-P_C"/>
    <property type="match status" value="1"/>
</dbReference>
<dbReference type="SUPFAM" id="SSF50249">
    <property type="entry name" value="Nucleic acid-binding proteins"/>
    <property type="match status" value="2"/>
</dbReference>
<dbReference type="SUPFAM" id="SSF50104">
    <property type="entry name" value="Translation proteins SH3-like domain"/>
    <property type="match status" value="1"/>
</dbReference>
<dbReference type="PROSITE" id="PS01275">
    <property type="entry name" value="EFP"/>
    <property type="match status" value="1"/>
</dbReference>
<feature type="chain" id="PRO_1000130915" description="Elongation factor P-like protein">
    <location>
        <begin position="1"/>
        <end position="190"/>
    </location>
</feature>
<sequence length="190" mass="21533">MPRANEIKKGMVLNYNGKLLLVKDIDIQSPTARGAATLYKMRFSDVRTGLKVEERFKGDDIVDTVTLTRRYVDFSYVDGNEYVFMDKEDYTPYTFTKDQIEEELLFMPEGGMPDMQVLTWDGQLLALELPQTVDLEIVETAPGIKGASASARNKPATLSTGLVIQVPEYLSPGEKIRIHIEERRYMGRAD</sequence>
<reference key="1">
    <citation type="journal article" date="2008" name="J. Bacteriol.">
        <title>The complete genome sequence of Escherichia coli DH10B: insights into the biology of a laboratory workhorse.</title>
        <authorList>
            <person name="Durfee T."/>
            <person name="Nelson R."/>
            <person name="Baldwin S."/>
            <person name="Plunkett G. III"/>
            <person name="Burland V."/>
            <person name="Mau B."/>
            <person name="Petrosino J.F."/>
            <person name="Qin X."/>
            <person name="Muzny D.M."/>
            <person name="Ayele M."/>
            <person name="Gibbs R.A."/>
            <person name="Csorgo B."/>
            <person name="Posfai G."/>
            <person name="Weinstock G.M."/>
            <person name="Blattner F.R."/>
        </authorList>
    </citation>
    <scope>NUCLEOTIDE SEQUENCE [LARGE SCALE GENOMIC DNA]</scope>
    <source>
        <strain>K12 / DH10B</strain>
    </source>
</reference>
<proteinExistence type="inferred from homology"/>
<gene>
    <name evidence="1" type="primary">yeiP</name>
    <name type="ordered locus">ECDH10B_2329</name>
</gene>
<comment type="similarity">
    <text evidence="1">Belongs to the elongation factor P family.</text>
</comment>
<evidence type="ECO:0000255" key="1">
    <source>
        <dbReference type="HAMAP-Rule" id="MF_00646"/>
    </source>
</evidence>
<organism>
    <name type="scientific">Escherichia coli (strain K12 / DH10B)</name>
    <dbReference type="NCBI Taxonomy" id="316385"/>
    <lineage>
        <taxon>Bacteria</taxon>
        <taxon>Pseudomonadati</taxon>
        <taxon>Pseudomonadota</taxon>
        <taxon>Gammaproteobacteria</taxon>
        <taxon>Enterobacterales</taxon>
        <taxon>Enterobacteriaceae</taxon>
        <taxon>Escherichia</taxon>
    </lineage>
</organism>
<protein>
    <recommendedName>
        <fullName evidence="1">Elongation factor P-like protein</fullName>
    </recommendedName>
</protein>
<accession>B1X869</accession>